<evidence type="ECO:0000255" key="1">
    <source>
        <dbReference type="HAMAP-Rule" id="MF_00910"/>
    </source>
</evidence>
<protein>
    <recommendedName>
        <fullName evidence="1">Cell division protein FtsL</fullName>
    </recommendedName>
</protein>
<reference key="1">
    <citation type="journal article" date="2001" name="J. Bacteriol.">
        <title>Genome of the bacterium Streptococcus pneumoniae strain R6.</title>
        <authorList>
            <person name="Hoskins J."/>
            <person name="Alborn W.E. Jr."/>
            <person name="Arnold J."/>
            <person name="Blaszczak L.C."/>
            <person name="Burgett S."/>
            <person name="DeHoff B.S."/>
            <person name="Estrem S.T."/>
            <person name="Fritz L."/>
            <person name="Fu D.-J."/>
            <person name="Fuller W."/>
            <person name="Geringer C."/>
            <person name="Gilmour R."/>
            <person name="Glass J.S."/>
            <person name="Khoja H."/>
            <person name="Kraft A.R."/>
            <person name="Lagace R.E."/>
            <person name="LeBlanc D.J."/>
            <person name="Lee L.N."/>
            <person name="Lefkowitz E.J."/>
            <person name="Lu J."/>
            <person name="Matsushima P."/>
            <person name="McAhren S.M."/>
            <person name="McHenney M."/>
            <person name="McLeaster K."/>
            <person name="Mundy C.W."/>
            <person name="Nicas T.I."/>
            <person name="Norris F.H."/>
            <person name="O'Gara M."/>
            <person name="Peery R.B."/>
            <person name="Robertson G.T."/>
            <person name="Rockey P."/>
            <person name="Sun P.-M."/>
            <person name="Winkler M.E."/>
            <person name="Yang Y."/>
            <person name="Young-Bellido M."/>
            <person name="Zhao G."/>
            <person name="Zook C.A."/>
            <person name="Baltz R.H."/>
            <person name="Jaskunas S.R."/>
            <person name="Rosteck P.R. Jr."/>
            <person name="Skatrud P.L."/>
            <person name="Glass J.I."/>
        </authorList>
    </citation>
    <scope>NUCLEOTIDE SEQUENCE [LARGE SCALE GENOMIC DNA]</scope>
    <source>
        <strain>ATCC BAA-255 / R6</strain>
    </source>
</reference>
<comment type="function">
    <text evidence="1">Essential cell division protein.</text>
</comment>
<comment type="subcellular location">
    <subcellularLocation>
        <location evidence="1">Cell membrane</location>
        <topology evidence="1">Single-pass type II membrane protein</topology>
    </subcellularLocation>
    <text evidence="1">Localizes to the division septum where it forms a ring structure.</text>
</comment>
<comment type="similarity">
    <text evidence="1">Belongs to the FtsL family.</text>
</comment>
<gene>
    <name evidence="1" type="primary">ftsL</name>
    <name type="ordered locus">spr0303</name>
</gene>
<organism>
    <name type="scientific">Streptococcus pneumoniae (strain ATCC BAA-255 / R6)</name>
    <dbReference type="NCBI Taxonomy" id="171101"/>
    <lineage>
        <taxon>Bacteria</taxon>
        <taxon>Bacillati</taxon>
        <taxon>Bacillota</taxon>
        <taxon>Bacilli</taxon>
        <taxon>Lactobacillales</taxon>
        <taxon>Streptococcaceae</taxon>
        <taxon>Streptococcus</taxon>
    </lineage>
</organism>
<accession>Q8DR70</accession>
<name>FTSL_STRR6</name>
<feature type="chain" id="PRO_0000414571" description="Cell division protein FtsL">
    <location>
        <begin position="1"/>
        <end position="105"/>
    </location>
</feature>
<feature type="topological domain" description="Cytoplasmic" evidence="1">
    <location>
        <begin position="1"/>
        <end position="24"/>
    </location>
</feature>
<feature type="transmembrane region" description="Helical" evidence="1">
    <location>
        <begin position="25"/>
        <end position="45"/>
    </location>
</feature>
<feature type="topological domain" description="Extracellular" evidence="1">
    <location>
        <begin position="46"/>
        <end position="105"/>
    </location>
</feature>
<keyword id="KW-0131">Cell cycle</keyword>
<keyword id="KW-0132">Cell division</keyword>
<keyword id="KW-1003">Cell membrane</keyword>
<keyword id="KW-0472">Membrane</keyword>
<keyword id="KW-1185">Reference proteome</keyword>
<keyword id="KW-0812">Transmembrane</keyword>
<keyword id="KW-1133">Transmembrane helix</keyword>
<proteinExistence type="inferred from homology"/>
<sequence>MAEKMEKTGQILQMQLKRFSRVEKAFYFSIAVTTLIVAISIIFMQTKLLQVQNDLTKINAQIEEKKTELDDAKQEVNELLRAERLKEIANSHDLQLNNENIRIAE</sequence>
<dbReference type="EMBL" id="AE007317">
    <property type="protein sequence ID" value="AAK99107.1"/>
    <property type="molecule type" value="Genomic_DNA"/>
</dbReference>
<dbReference type="PIR" id="E95039">
    <property type="entry name" value="E95039"/>
</dbReference>
<dbReference type="PIR" id="G97909">
    <property type="entry name" value="G97909"/>
</dbReference>
<dbReference type="RefSeq" id="NP_357897.1">
    <property type="nucleotide sequence ID" value="NC_003098.1"/>
</dbReference>
<dbReference type="RefSeq" id="WP_000818547.1">
    <property type="nucleotide sequence ID" value="NC_003098.1"/>
</dbReference>
<dbReference type="SMR" id="Q8DR70"/>
<dbReference type="STRING" id="171101.spr0303"/>
<dbReference type="GeneID" id="45652197"/>
<dbReference type="KEGG" id="spr:spr0303"/>
<dbReference type="PATRIC" id="fig|171101.6.peg.340"/>
<dbReference type="eggNOG" id="COG4839">
    <property type="taxonomic scope" value="Bacteria"/>
</dbReference>
<dbReference type="HOGENOM" id="CLU_155775_1_0_9"/>
<dbReference type="Proteomes" id="UP000000586">
    <property type="component" value="Chromosome"/>
</dbReference>
<dbReference type="GO" id="GO:0032153">
    <property type="term" value="C:cell division site"/>
    <property type="evidence" value="ECO:0007669"/>
    <property type="project" value="UniProtKB-UniRule"/>
</dbReference>
<dbReference type="GO" id="GO:0005886">
    <property type="term" value="C:plasma membrane"/>
    <property type="evidence" value="ECO:0007669"/>
    <property type="project" value="UniProtKB-SubCell"/>
</dbReference>
<dbReference type="GO" id="GO:0043093">
    <property type="term" value="P:FtsZ-dependent cytokinesis"/>
    <property type="evidence" value="ECO:0007669"/>
    <property type="project" value="UniProtKB-UniRule"/>
</dbReference>
<dbReference type="HAMAP" id="MF_00910">
    <property type="entry name" value="FtsL"/>
    <property type="match status" value="1"/>
</dbReference>
<dbReference type="InterPro" id="IPR011922">
    <property type="entry name" value="Cell_div_FtsL"/>
</dbReference>
<dbReference type="NCBIfam" id="TIGR02209">
    <property type="entry name" value="ftsL_broad"/>
    <property type="match status" value="1"/>
</dbReference>